<proteinExistence type="inferred from homology"/>
<evidence type="ECO:0000250" key="1"/>
<evidence type="ECO:0000255" key="2"/>
<evidence type="ECO:0000305" key="3"/>
<name>CDSA_RICTY</name>
<reference key="1">
    <citation type="journal article" date="2004" name="J. Bacteriol.">
        <title>Complete genome sequence of Rickettsia typhi and comparison with sequences of other Rickettsiae.</title>
        <authorList>
            <person name="McLeod M.P."/>
            <person name="Qin X."/>
            <person name="Karpathy S.E."/>
            <person name="Gioia J."/>
            <person name="Highlander S.K."/>
            <person name="Fox G.E."/>
            <person name="McNeill T.Z."/>
            <person name="Jiang H."/>
            <person name="Muzny D."/>
            <person name="Jacob L.S."/>
            <person name="Hawes A.C."/>
            <person name="Sodergren E."/>
            <person name="Gill R."/>
            <person name="Hume J."/>
            <person name="Morgan M."/>
            <person name="Fan G."/>
            <person name="Amin A.G."/>
            <person name="Gibbs R.A."/>
            <person name="Hong C."/>
            <person name="Yu X.-J."/>
            <person name="Walker D.H."/>
            <person name="Weinstock G.M."/>
        </authorList>
    </citation>
    <scope>NUCLEOTIDE SEQUENCE [LARGE SCALE GENOMIC DNA]</scope>
    <source>
        <strain>ATCC VR-144 / Wilmington</strain>
    </source>
</reference>
<dbReference type="EC" id="2.7.7.41"/>
<dbReference type="EMBL" id="AE017197">
    <property type="protein sequence ID" value="AAU03887.1"/>
    <property type="molecule type" value="Genomic_DNA"/>
</dbReference>
<dbReference type="RefSeq" id="WP_011190871.1">
    <property type="nucleotide sequence ID" value="NC_006142.1"/>
</dbReference>
<dbReference type="SMR" id="Q68WV5"/>
<dbReference type="KEGG" id="rty:RT0410"/>
<dbReference type="eggNOG" id="COG0575">
    <property type="taxonomic scope" value="Bacteria"/>
</dbReference>
<dbReference type="HOGENOM" id="CLU_037294_1_1_5"/>
<dbReference type="OrthoDB" id="9799199at2"/>
<dbReference type="UniPathway" id="UPA00557">
    <property type="reaction ID" value="UER00614"/>
</dbReference>
<dbReference type="Proteomes" id="UP000000604">
    <property type="component" value="Chromosome"/>
</dbReference>
<dbReference type="GO" id="GO:0005886">
    <property type="term" value="C:plasma membrane"/>
    <property type="evidence" value="ECO:0007669"/>
    <property type="project" value="UniProtKB-SubCell"/>
</dbReference>
<dbReference type="GO" id="GO:0004605">
    <property type="term" value="F:phosphatidate cytidylyltransferase activity"/>
    <property type="evidence" value="ECO:0007669"/>
    <property type="project" value="UniProtKB-EC"/>
</dbReference>
<dbReference type="GO" id="GO:0016024">
    <property type="term" value="P:CDP-diacylglycerol biosynthetic process"/>
    <property type="evidence" value="ECO:0007669"/>
    <property type="project" value="UniProtKB-UniPathway"/>
</dbReference>
<dbReference type="InterPro" id="IPR000374">
    <property type="entry name" value="PC_trans"/>
</dbReference>
<dbReference type="PANTHER" id="PTHR46382">
    <property type="entry name" value="PHOSPHATIDATE CYTIDYLYLTRANSFERASE"/>
    <property type="match status" value="1"/>
</dbReference>
<dbReference type="PANTHER" id="PTHR46382:SF1">
    <property type="entry name" value="PHOSPHATIDATE CYTIDYLYLTRANSFERASE"/>
    <property type="match status" value="1"/>
</dbReference>
<dbReference type="Pfam" id="PF01148">
    <property type="entry name" value="CTP_transf_1"/>
    <property type="match status" value="1"/>
</dbReference>
<dbReference type="PROSITE" id="PS01315">
    <property type="entry name" value="CDS"/>
    <property type="match status" value="1"/>
</dbReference>
<gene>
    <name type="primary">cdsA</name>
    <name type="ordered locus">RT0410</name>
</gene>
<organism>
    <name type="scientific">Rickettsia typhi (strain ATCC VR-144 / Wilmington)</name>
    <dbReference type="NCBI Taxonomy" id="257363"/>
    <lineage>
        <taxon>Bacteria</taxon>
        <taxon>Pseudomonadati</taxon>
        <taxon>Pseudomonadota</taxon>
        <taxon>Alphaproteobacteria</taxon>
        <taxon>Rickettsiales</taxon>
        <taxon>Rickettsiaceae</taxon>
        <taxon>Rickettsieae</taxon>
        <taxon>Rickettsia</taxon>
        <taxon>typhus group</taxon>
    </lineage>
</organism>
<keyword id="KW-1003">Cell membrane</keyword>
<keyword id="KW-0444">Lipid biosynthesis</keyword>
<keyword id="KW-0443">Lipid metabolism</keyword>
<keyword id="KW-0472">Membrane</keyword>
<keyword id="KW-0548">Nucleotidyltransferase</keyword>
<keyword id="KW-0594">Phospholipid biosynthesis</keyword>
<keyword id="KW-1208">Phospholipid metabolism</keyword>
<keyword id="KW-0808">Transferase</keyword>
<keyword id="KW-0812">Transmembrane</keyword>
<keyword id="KW-1133">Transmembrane helix</keyword>
<sequence>MITQKEKEHLAKDKQNIYLRIISGIVLVSLFVVAILWFKTLFYILMILVGLGMLSEWCNMTSSSIHYLLIGFIIIPIPISLLIFLSTQESNRLVIMLYFCIIWSVDTFAMIGGKTFKGTKLAPKISPKKTWTGLIIGTISAGLIAVLVSLIPYYHIENYYFSNKIYLFIISCILALIAQSSDLFISYFKRKFNIKDSGHIIPGHGGVLDRFDSIILTAPVFFGINIYL</sequence>
<comment type="catalytic activity">
    <reaction>
        <text>a 1,2-diacyl-sn-glycero-3-phosphate + CTP + H(+) = a CDP-1,2-diacyl-sn-glycerol + diphosphate</text>
        <dbReference type="Rhea" id="RHEA:16229"/>
        <dbReference type="ChEBI" id="CHEBI:15378"/>
        <dbReference type="ChEBI" id="CHEBI:33019"/>
        <dbReference type="ChEBI" id="CHEBI:37563"/>
        <dbReference type="ChEBI" id="CHEBI:58332"/>
        <dbReference type="ChEBI" id="CHEBI:58608"/>
        <dbReference type="EC" id="2.7.7.41"/>
    </reaction>
</comment>
<comment type="pathway">
    <text>Phospholipid metabolism; CDP-diacylglycerol biosynthesis; CDP-diacylglycerol from sn-glycerol 3-phosphate: step 3/3.</text>
</comment>
<comment type="subcellular location">
    <subcellularLocation>
        <location evidence="1">Cell membrane</location>
        <topology evidence="1">Multi-pass membrane protein</topology>
    </subcellularLocation>
</comment>
<comment type="similarity">
    <text evidence="3">Belongs to the CDS family.</text>
</comment>
<accession>Q68WV5</accession>
<feature type="chain" id="PRO_0000281059" description="Phosphatidate cytidylyltransferase">
    <location>
        <begin position="1"/>
        <end position="228"/>
    </location>
</feature>
<feature type="transmembrane region" description="Helical" evidence="2">
    <location>
        <begin position="31"/>
        <end position="51"/>
    </location>
</feature>
<feature type="transmembrane region" description="Helical" evidence="2">
    <location>
        <begin position="65"/>
        <end position="85"/>
    </location>
</feature>
<feature type="transmembrane region" description="Helical" evidence="2">
    <location>
        <begin position="93"/>
        <end position="113"/>
    </location>
</feature>
<feature type="transmembrane region" description="Helical" evidence="2">
    <location>
        <begin position="131"/>
        <end position="151"/>
    </location>
</feature>
<feature type="transmembrane region" description="Helical" evidence="2">
    <location>
        <begin position="165"/>
        <end position="185"/>
    </location>
</feature>
<feature type="transmembrane region" description="Helical" evidence="2">
    <location>
        <begin position="206"/>
        <end position="226"/>
    </location>
</feature>
<protein>
    <recommendedName>
        <fullName>Phosphatidate cytidylyltransferase</fullName>
        <ecNumber>2.7.7.41</ecNumber>
    </recommendedName>
    <alternativeName>
        <fullName>CDP-DAG synthase</fullName>
    </alternativeName>
    <alternativeName>
        <fullName>CDP-DG synthase</fullName>
    </alternativeName>
    <alternativeName>
        <fullName>CDP-diacylglycerol synthase</fullName>
        <shortName>CDS</shortName>
    </alternativeName>
    <alternativeName>
        <fullName>CDP-diglyceride pyrophosphorylase</fullName>
    </alternativeName>
    <alternativeName>
        <fullName>CDP-diglyceride synthase</fullName>
    </alternativeName>
    <alternativeName>
        <fullName>CTP:phosphatidate cytidylyltransferase</fullName>
    </alternativeName>
</protein>